<accession>A8CEM4</accession>
<name>ASIP_MACMR</name>
<protein>
    <recommendedName>
        <fullName>Agouti-signaling protein</fullName>
        <shortName>ASP</shortName>
    </recommendedName>
    <alternativeName>
        <fullName>Agouti switch protein</fullName>
    </alternativeName>
</protein>
<reference key="1">
    <citation type="submission" date="2007-03" db="EMBL/GenBank/DDBJ databases">
        <title>Association of the agouti signaling protein gene with coat color variation in the macaques.</title>
        <authorList>
            <person name="Nakayama K."/>
            <person name="Shotake T."/>
            <person name="Takenaka O."/>
            <person name="Ishida T."/>
        </authorList>
    </citation>
    <scope>NUCLEOTIDE SEQUENCE [GENOMIC DNA]</scope>
</reference>
<proteinExistence type="inferred from homology"/>
<gene>
    <name type="primary">ASIP</name>
</gene>
<comment type="function">
    <text evidence="3">Involved in the regulation of melanogenesis. The binding of ASP to MC1R precludes alpha-MSH initiated signaling and thus blocks production of cAMP, leading to a down-regulation of eumelanogenesis (brown/black pigment) and thus increasing synthesis of pheomelanin (yellow/red pigment) (By similarity).</text>
</comment>
<comment type="subcellular location">
    <subcellularLocation>
        <location evidence="2">Secreted</location>
    </subcellularLocation>
</comment>
<comment type="domain">
    <text evidence="1">The presence of a 'disulfide through disulfide knot' structurally defines this protein as a knottin.</text>
</comment>
<dbReference type="EMBL" id="AB299212">
    <property type="protein sequence ID" value="BAF80796.1"/>
    <property type="molecule type" value="Genomic_DNA"/>
</dbReference>
<dbReference type="GlyCosmos" id="A8CEM4">
    <property type="glycosylation" value="1 site, No reported glycans"/>
</dbReference>
<dbReference type="GO" id="GO:0005615">
    <property type="term" value="C:extracellular space"/>
    <property type="evidence" value="ECO:0000250"/>
    <property type="project" value="UniProtKB"/>
</dbReference>
<dbReference type="GO" id="GO:0031779">
    <property type="term" value="F:melanocortin receptor binding"/>
    <property type="evidence" value="ECO:0007669"/>
    <property type="project" value="TreeGrafter"/>
</dbReference>
<dbReference type="GO" id="GO:0005184">
    <property type="term" value="F:neuropeptide hormone activity"/>
    <property type="evidence" value="ECO:0007669"/>
    <property type="project" value="TreeGrafter"/>
</dbReference>
<dbReference type="GO" id="GO:0009755">
    <property type="term" value="P:hormone-mediated signaling pathway"/>
    <property type="evidence" value="ECO:0007669"/>
    <property type="project" value="InterPro"/>
</dbReference>
<dbReference type="GO" id="GO:0042438">
    <property type="term" value="P:melanin biosynthetic process"/>
    <property type="evidence" value="ECO:0000250"/>
    <property type="project" value="UniProtKB"/>
</dbReference>
<dbReference type="GO" id="GO:0032438">
    <property type="term" value="P:melanosome organization"/>
    <property type="evidence" value="ECO:0007669"/>
    <property type="project" value="TreeGrafter"/>
</dbReference>
<dbReference type="FunFam" id="4.10.760.10:FF:000002">
    <property type="entry name" value="Agouti-signaling protein"/>
    <property type="match status" value="1"/>
</dbReference>
<dbReference type="Gene3D" id="4.10.760.10">
    <property type="entry name" value="Agouti domain"/>
    <property type="match status" value="1"/>
</dbReference>
<dbReference type="InterPro" id="IPR007733">
    <property type="entry name" value="Agouti"/>
</dbReference>
<dbReference type="InterPro" id="IPR027300">
    <property type="entry name" value="Agouti_dom"/>
</dbReference>
<dbReference type="InterPro" id="IPR036836">
    <property type="entry name" value="Agouti_dom_sf"/>
</dbReference>
<dbReference type="PANTHER" id="PTHR16551">
    <property type="entry name" value="AGOUTI RELATED"/>
    <property type="match status" value="1"/>
</dbReference>
<dbReference type="PANTHER" id="PTHR16551:SF1">
    <property type="entry name" value="AGOUTI-SIGNALING PROTEIN"/>
    <property type="match status" value="1"/>
</dbReference>
<dbReference type="Pfam" id="PF05039">
    <property type="entry name" value="Agouti"/>
    <property type="match status" value="1"/>
</dbReference>
<dbReference type="SMART" id="SM00792">
    <property type="entry name" value="Agouti"/>
    <property type="match status" value="1"/>
</dbReference>
<dbReference type="SUPFAM" id="SSF57055">
    <property type="entry name" value="Agouti-related protein"/>
    <property type="match status" value="1"/>
</dbReference>
<dbReference type="PROSITE" id="PS60024">
    <property type="entry name" value="AGOUTI_1"/>
    <property type="match status" value="1"/>
</dbReference>
<dbReference type="PROSITE" id="PS51150">
    <property type="entry name" value="AGOUTI_2"/>
    <property type="match status" value="1"/>
</dbReference>
<keyword id="KW-1015">Disulfide bond</keyword>
<keyword id="KW-0325">Glycoprotein</keyword>
<keyword id="KW-0960">Knottin</keyword>
<keyword id="KW-0964">Secreted</keyword>
<keyword id="KW-0732">Signal</keyword>
<feature type="signal peptide" evidence="4">
    <location>
        <begin position="1"/>
        <end position="22"/>
    </location>
</feature>
<feature type="chain" id="PRO_0000323395" description="Agouti-signaling protein">
    <location>
        <begin position="23"/>
        <end position="132"/>
    </location>
</feature>
<feature type="domain" description="Agouti" evidence="5">
    <location>
        <begin position="93"/>
        <end position="132"/>
    </location>
</feature>
<feature type="region of interest" description="Disordered" evidence="6">
    <location>
        <begin position="61"/>
        <end position="87"/>
    </location>
</feature>
<feature type="compositionally biased region" description="Basic and acidic residues" evidence="6">
    <location>
        <begin position="63"/>
        <end position="79"/>
    </location>
</feature>
<feature type="glycosylation site" description="N-linked (GlcNAc...) asparagine" evidence="4">
    <location>
        <position position="39"/>
    </location>
</feature>
<feature type="disulfide bond" evidence="5">
    <location>
        <begin position="93"/>
        <end position="108"/>
    </location>
</feature>
<feature type="disulfide bond" evidence="5">
    <location>
        <begin position="100"/>
        <end position="114"/>
    </location>
</feature>
<feature type="disulfide bond" evidence="5">
    <location>
        <begin position="107"/>
        <end position="125"/>
    </location>
</feature>
<feature type="disulfide bond" evidence="5">
    <location>
        <begin position="111"/>
        <end position="132"/>
    </location>
</feature>
<feature type="disulfide bond" evidence="5">
    <location>
        <begin position="116"/>
        <end position="123"/>
    </location>
</feature>
<sequence length="132" mass="14643">MDVTRLLLATLLVFLCFFTAYSHPPPEEKLRDDRSLRSNSSVNLLDFPSVSIVALNKNSKQISRKEAEKKRSSKKEASMKKVARPRTPLSAPCVATRDSCKPPAPACCDPCASCQCRFFRSACSCRVLSLNC</sequence>
<organism>
    <name type="scientific">Macaca maura</name>
    <name type="common">Moor macaque</name>
    <dbReference type="NCBI Taxonomy" id="90383"/>
    <lineage>
        <taxon>Eukaryota</taxon>
        <taxon>Metazoa</taxon>
        <taxon>Chordata</taxon>
        <taxon>Craniata</taxon>
        <taxon>Vertebrata</taxon>
        <taxon>Euteleostomi</taxon>
        <taxon>Mammalia</taxon>
        <taxon>Eutheria</taxon>
        <taxon>Euarchontoglires</taxon>
        <taxon>Primates</taxon>
        <taxon>Haplorrhini</taxon>
        <taxon>Catarrhini</taxon>
        <taxon>Cercopithecidae</taxon>
        <taxon>Cercopithecinae</taxon>
        <taxon>Macaca</taxon>
    </lineage>
</organism>
<evidence type="ECO:0000250" key="1"/>
<evidence type="ECO:0000250" key="2">
    <source>
        <dbReference type="UniProtKB" id="P42127"/>
    </source>
</evidence>
<evidence type="ECO:0000250" key="3">
    <source>
        <dbReference type="UniProtKB" id="Q03288"/>
    </source>
</evidence>
<evidence type="ECO:0000255" key="4"/>
<evidence type="ECO:0000255" key="5">
    <source>
        <dbReference type="PROSITE-ProRule" id="PRU00494"/>
    </source>
</evidence>
<evidence type="ECO:0000256" key="6">
    <source>
        <dbReference type="SAM" id="MobiDB-lite"/>
    </source>
</evidence>